<keyword id="KW-0002">3D-structure</keyword>
<keyword id="KW-0170">Cobalt</keyword>
<keyword id="KW-0408">Iron</keyword>
<keyword id="KW-0413">Isomerase</keyword>
<keyword id="KW-0464">Manganese</keyword>
<keyword id="KW-0479">Metal-binding</keyword>
<keyword id="KW-1185">Reference proteome</keyword>
<feature type="chain" id="PRO_0000084215" description="Inosose isomerase">
    <location>
        <begin position="1"/>
        <end position="278"/>
    </location>
</feature>
<feature type="binding site">
    <location>
        <position position="142"/>
    </location>
    <ligand>
        <name>a divalent metal cation</name>
        <dbReference type="ChEBI" id="CHEBI:60240"/>
    </ligand>
</feature>
<feature type="binding site">
    <location>
        <position position="174"/>
    </location>
    <ligand>
        <name>a divalent metal cation</name>
        <dbReference type="ChEBI" id="CHEBI:60240"/>
    </ligand>
</feature>
<feature type="binding site">
    <location>
        <position position="200"/>
    </location>
    <ligand>
        <name>a divalent metal cation</name>
        <dbReference type="ChEBI" id="CHEBI:60240"/>
    </ligand>
</feature>
<feature type="binding site">
    <location>
        <position position="246"/>
    </location>
    <ligand>
        <name>a divalent metal cation</name>
        <dbReference type="ChEBI" id="CHEBI:60240"/>
    </ligand>
</feature>
<feature type="strand" evidence="3">
    <location>
        <begin position="2"/>
        <end position="6"/>
    </location>
</feature>
<feature type="helix" evidence="3">
    <location>
        <begin position="7"/>
        <end position="10"/>
    </location>
</feature>
<feature type="turn" evidence="3">
    <location>
        <begin position="11"/>
        <end position="13"/>
    </location>
</feature>
<feature type="helix" evidence="3">
    <location>
        <begin position="16"/>
        <end position="25"/>
    </location>
</feature>
<feature type="strand" evidence="3">
    <location>
        <begin position="29"/>
        <end position="34"/>
    </location>
</feature>
<feature type="turn" evidence="3">
    <location>
        <begin position="35"/>
        <end position="37"/>
    </location>
</feature>
<feature type="helix" evidence="3">
    <location>
        <begin position="38"/>
        <end position="42"/>
    </location>
</feature>
<feature type="helix" evidence="3">
    <location>
        <begin position="48"/>
        <end position="56"/>
    </location>
</feature>
<feature type="strand" evidence="3">
    <location>
        <begin position="61"/>
        <end position="69"/>
    </location>
</feature>
<feature type="helix" evidence="3">
    <location>
        <begin position="76"/>
        <end position="96"/>
    </location>
</feature>
<feature type="strand" evidence="3">
    <location>
        <begin position="100"/>
        <end position="104"/>
    </location>
</feature>
<feature type="helix" evidence="3">
    <location>
        <begin position="114"/>
        <end position="132"/>
    </location>
</feature>
<feature type="helix" evidence="3">
    <location>
        <begin position="133"/>
        <end position="135"/>
    </location>
</feature>
<feature type="strand" evidence="3">
    <location>
        <begin position="138"/>
        <end position="142"/>
    </location>
</feature>
<feature type="strand" evidence="3">
    <location>
        <begin position="149"/>
        <end position="151"/>
    </location>
</feature>
<feature type="helix" evidence="3">
    <location>
        <begin position="154"/>
        <end position="164"/>
    </location>
</feature>
<feature type="strand" evidence="3">
    <location>
        <begin position="169"/>
        <end position="174"/>
    </location>
</feature>
<feature type="helix" evidence="3">
    <location>
        <begin position="175"/>
        <end position="180"/>
    </location>
</feature>
<feature type="helix" evidence="3">
    <location>
        <begin position="185"/>
        <end position="189"/>
    </location>
</feature>
<feature type="helix" evidence="3">
    <location>
        <begin position="193"/>
        <end position="195"/>
    </location>
</feature>
<feature type="strand" evidence="3">
    <location>
        <begin position="196"/>
        <end position="201"/>
    </location>
</feature>
<feature type="turn" evidence="3">
    <location>
        <begin position="209"/>
        <end position="211"/>
    </location>
</feature>
<feature type="helix" evidence="3">
    <location>
        <begin position="214"/>
        <end position="216"/>
    </location>
</feature>
<feature type="strand" evidence="3">
    <location>
        <begin position="217"/>
        <end position="219"/>
    </location>
</feature>
<feature type="strand" evidence="3">
    <location>
        <begin position="222"/>
        <end position="225"/>
    </location>
</feature>
<feature type="helix" evidence="3">
    <location>
        <begin position="227"/>
        <end position="236"/>
    </location>
</feature>
<feature type="strand" evidence="3">
    <location>
        <begin position="241"/>
        <end position="245"/>
    </location>
</feature>
<feature type="helix" evidence="3">
    <location>
        <begin position="250"/>
        <end position="254"/>
    </location>
</feature>
<feature type="helix" evidence="3">
    <location>
        <begin position="257"/>
        <end position="272"/>
    </location>
</feature>
<feature type="turn" evidence="3">
    <location>
        <begin position="273"/>
        <end position="275"/>
    </location>
</feature>
<comment type="function">
    <text evidence="1">Involved in the reversible interconverion of 2-keto-myo-inositol (2KMI, inosose or 2,4,6/3,5-pentahydroxycyclohexanone) to 1-keto-D-chiro-inositol (1KDCI or 2,3,5/4,6-pentahydroxycyclohexanone).</text>
</comment>
<comment type="catalytic activity">
    <reaction evidence="1">
        <text>scyllo-inosose = scyllo-inosine</text>
        <dbReference type="Rhea" id="RHEA:25776"/>
        <dbReference type="ChEBI" id="CHEBI:17811"/>
        <dbReference type="ChEBI" id="CHEBI:50920"/>
        <dbReference type="EC" id="5.3.99.11"/>
    </reaction>
</comment>
<comment type="cofactor">
    <cofactor evidence="1">
        <name>Mn(2+)</name>
        <dbReference type="ChEBI" id="CHEBI:29035"/>
    </cofactor>
    <cofactor evidence="1">
        <name>Fe(2+)</name>
        <dbReference type="ChEBI" id="CHEBI:29033"/>
    </cofactor>
    <cofactor evidence="1">
        <name>Co(2+)</name>
        <dbReference type="ChEBI" id="CHEBI:48828"/>
    </cofactor>
    <text evidence="1">Binds 1 divalent metal cation per subunit. Can use Mn(2+), Fe(2+) or Co(2+).</text>
</comment>
<comment type="pathway">
    <text>Polyol metabolism; myo-inositol degradation into acetyl-CoA.</text>
</comment>
<comment type="similarity">
    <text evidence="2">Belongs to the IolI family.</text>
</comment>
<dbReference type="EC" id="5.3.99.11"/>
<dbReference type="EMBL" id="D14399">
    <property type="protein sequence ID" value="BAA03298.1"/>
    <property type="molecule type" value="Genomic_DNA"/>
</dbReference>
<dbReference type="EMBL" id="AL009126">
    <property type="protein sequence ID" value="CAB16004.1"/>
    <property type="molecule type" value="Genomic_DNA"/>
</dbReference>
<dbReference type="PIR" id="A69646">
    <property type="entry name" value="A69646"/>
</dbReference>
<dbReference type="RefSeq" id="NP_391847.1">
    <property type="nucleotide sequence ID" value="NC_000964.3"/>
</dbReference>
<dbReference type="RefSeq" id="WP_003244546.1">
    <property type="nucleotide sequence ID" value="NZ_OZ025638.1"/>
</dbReference>
<dbReference type="PDB" id="1I60">
    <property type="method" value="X-ray"/>
    <property type="resolution" value="1.60 A"/>
    <property type="chains" value="A=1-278"/>
</dbReference>
<dbReference type="PDB" id="1I6N">
    <property type="method" value="X-ray"/>
    <property type="resolution" value="1.80 A"/>
    <property type="chains" value="A=1-278"/>
</dbReference>
<dbReference type="PDBsum" id="1I60"/>
<dbReference type="PDBsum" id="1I6N"/>
<dbReference type="SMR" id="P42419"/>
<dbReference type="FunCoup" id="P42419">
    <property type="interactions" value="53"/>
</dbReference>
<dbReference type="STRING" id="224308.BSU39680"/>
<dbReference type="jPOST" id="P42419"/>
<dbReference type="PaxDb" id="224308-BSU39680"/>
<dbReference type="DNASU" id="937582"/>
<dbReference type="EnsemblBacteria" id="CAB16004">
    <property type="protein sequence ID" value="CAB16004"/>
    <property type="gene ID" value="BSU_39680"/>
</dbReference>
<dbReference type="GeneID" id="937582"/>
<dbReference type="KEGG" id="bsu:BSU39680"/>
<dbReference type="PATRIC" id="fig|224308.179.peg.4293"/>
<dbReference type="eggNOG" id="COG1082">
    <property type="taxonomic scope" value="Bacteria"/>
</dbReference>
<dbReference type="InParanoid" id="P42419"/>
<dbReference type="OrthoDB" id="9782626at2"/>
<dbReference type="PhylomeDB" id="P42419"/>
<dbReference type="BioCyc" id="BSUB:BSU39680-MONOMER"/>
<dbReference type="BioCyc" id="MetaCyc:BSU39680-MONOMER"/>
<dbReference type="BRENDA" id="5.3.99.11">
    <property type="organism ID" value="658"/>
</dbReference>
<dbReference type="UniPathway" id="UPA00076"/>
<dbReference type="EvolutionaryTrace" id="P42419"/>
<dbReference type="Proteomes" id="UP000001570">
    <property type="component" value="Chromosome"/>
</dbReference>
<dbReference type="GO" id="GO:0016853">
    <property type="term" value="F:isomerase activity"/>
    <property type="evidence" value="ECO:0007669"/>
    <property type="project" value="UniProtKB-KW"/>
</dbReference>
<dbReference type="GO" id="GO:0046872">
    <property type="term" value="F:metal ion binding"/>
    <property type="evidence" value="ECO:0007669"/>
    <property type="project" value="UniProtKB-KW"/>
</dbReference>
<dbReference type="Gene3D" id="3.20.20.150">
    <property type="entry name" value="Divalent-metal-dependent TIM barrel enzymes"/>
    <property type="match status" value="1"/>
</dbReference>
<dbReference type="InterPro" id="IPR050312">
    <property type="entry name" value="IolE/XylAMocC-like"/>
</dbReference>
<dbReference type="InterPro" id="IPR036237">
    <property type="entry name" value="Xyl_isomerase-like_sf"/>
</dbReference>
<dbReference type="InterPro" id="IPR013022">
    <property type="entry name" value="Xyl_isomerase-like_TIM-brl"/>
</dbReference>
<dbReference type="PANTHER" id="PTHR12110">
    <property type="entry name" value="HYDROXYPYRUVATE ISOMERASE"/>
    <property type="match status" value="1"/>
</dbReference>
<dbReference type="PANTHER" id="PTHR12110:SF21">
    <property type="entry name" value="XYLOSE ISOMERASE-LIKE TIM BARREL DOMAIN-CONTAINING PROTEIN"/>
    <property type="match status" value="1"/>
</dbReference>
<dbReference type="Pfam" id="PF01261">
    <property type="entry name" value="AP_endonuc_2"/>
    <property type="match status" value="1"/>
</dbReference>
<dbReference type="SUPFAM" id="SSF51658">
    <property type="entry name" value="Xylose isomerase-like"/>
    <property type="match status" value="1"/>
</dbReference>
<protein>
    <recommendedName>
        <fullName>Inosose isomerase</fullName>
        <ecNumber>5.3.99.11</ecNumber>
    </recommendedName>
    <alternativeName>
        <fullName>2-keto-myo-inositol isomerase</fullName>
        <shortName>2KMI isomerase</shortName>
    </alternativeName>
</protein>
<name>IOLI_BACSU</name>
<organism>
    <name type="scientific">Bacillus subtilis (strain 168)</name>
    <dbReference type="NCBI Taxonomy" id="224308"/>
    <lineage>
        <taxon>Bacteria</taxon>
        <taxon>Bacillati</taxon>
        <taxon>Bacillota</taxon>
        <taxon>Bacilli</taxon>
        <taxon>Bacillales</taxon>
        <taxon>Bacillaceae</taxon>
        <taxon>Bacillus</taxon>
    </lineage>
</organism>
<accession>P42419</accession>
<reference key="1">
    <citation type="journal article" date="1994" name="Microbiology">
        <title>Cloning and nucleotide sequencing of a 15 kb region of the Bacillus subtilis genome containing the iol operon.</title>
        <authorList>
            <person name="Yoshida K."/>
            <person name="Sano H."/>
            <person name="Miwa Y."/>
            <person name="Ogasawara N."/>
            <person name="Fujita Y."/>
        </authorList>
    </citation>
    <scope>NUCLEOTIDE SEQUENCE [GENOMIC DNA]</scope>
    <source>
        <strain>168 / BGSC1A1</strain>
    </source>
</reference>
<reference key="2">
    <citation type="journal article" date="1997" name="Nature">
        <title>The complete genome sequence of the Gram-positive bacterium Bacillus subtilis.</title>
        <authorList>
            <person name="Kunst F."/>
            <person name="Ogasawara N."/>
            <person name="Moszer I."/>
            <person name="Albertini A.M."/>
            <person name="Alloni G."/>
            <person name="Azevedo V."/>
            <person name="Bertero M.G."/>
            <person name="Bessieres P."/>
            <person name="Bolotin A."/>
            <person name="Borchert S."/>
            <person name="Borriss R."/>
            <person name="Boursier L."/>
            <person name="Brans A."/>
            <person name="Braun M."/>
            <person name="Brignell S.C."/>
            <person name="Bron S."/>
            <person name="Brouillet S."/>
            <person name="Bruschi C.V."/>
            <person name="Caldwell B."/>
            <person name="Capuano V."/>
            <person name="Carter N.M."/>
            <person name="Choi S.-K."/>
            <person name="Codani J.-J."/>
            <person name="Connerton I.F."/>
            <person name="Cummings N.J."/>
            <person name="Daniel R.A."/>
            <person name="Denizot F."/>
            <person name="Devine K.M."/>
            <person name="Duesterhoeft A."/>
            <person name="Ehrlich S.D."/>
            <person name="Emmerson P.T."/>
            <person name="Entian K.-D."/>
            <person name="Errington J."/>
            <person name="Fabret C."/>
            <person name="Ferrari E."/>
            <person name="Foulger D."/>
            <person name="Fritz C."/>
            <person name="Fujita M."/>
            <person name="Fujita Y."/>
            <person name="Fuma S."/>
            <person name="Galizzi A."/>
            <person name="Galleron N."/>
            <person name="Ghim S.-Y."/>
            <person name="Glaser P."/>
            <person name="Goffeau A."/>
            <person name="Golightly E.J."/>
            <person name="Grandi G."/>
            <person name="Guiseppi G."/>
            <person name="Guy B.J."/>
            <person name="Haga K."/>
            <person name="Haiech J."/>
            <person name="Harwood C.R."/>
            <person name="Henaut A."/>
            <person name="Hilbert H."/>
            <person name="Holsappel S."/>
            <person name="Hosono S."/>
            <person name="Hullo M.-F."/>
            <person name="Itaya M."/>
            <person name="Jones L.-M."/>
            <person name="Joris B."/>
            <person name="Karamata D."/>
            <person name="Kasahara Y."/>
            <person name="Klaerr-Blanchard M."/>
            <person name="Klein C."/>
            <person name="Kobayashi Y."/>
            <person name="Koetter P."/>
            <person name="Koningstein G."/>
            <person name="Krogh S."/>
            <person name="Kumano M."/>
            <person name="Kurita K."/>
            <person name="Lapidus A."/>
            <person name="Lardinois S."/>
            <person name="Lauber J."/>
            <person name="Lazarevic V."/>
            <person name="Lee S.-M."/>
            <person name="Levine A."/>
            <person name="Liu H."/>
            <person name="Masuda S."/>
            <person name="Mauel C."/>
            <person name="Medigue C."/>
            <person name="Medina N."/>
            <person name="Mellado R.P."/>
            <person name="Mizuno M."/>
            <person name="Moestl D."/>
            <person name="Nakai S."/>
            <person name="Noback M."/>
            <person name="Noone D."/>
            <person name="O'Reilly M."/>
            <person name="Ogawa K."/>
            <person name="Ogiwara A."/>
            <person name="Oudega B."/>
            <person name="Park S.-H."/>
            <person name="Parro V."/>
            <person name="Pohl T.M."/>
            <person name="Portetelle D."/>
            <person name="Porwollik S."/>
            <person name="Prescott A.M."/>
            <person name="Presecan E."/>
            <person name="Pujic P."/>
            <person name="Purnelle B."/>
            <person name="Rapoport G."/>
            <person name="Rey M."/>
            <person name="Reynolds S."/>
            <person name="Rieger M."/>
            <person name="Rivolta C."/>
            <person name="Rocha E."/>
            <person name="Roche B."/>
            <person name="Rose M."/>
            <person name="Sadaie Y."/>
            <person name="Sato T."/>
            <person name="Scanlan E."/>
            <person name="Schleich S."/>
            <person name="Schroeter R."/>
            <person name="Scoffone F."/>
            <person name="Sekiguchi J."/>
            <person name="Sekowska A."/>
            <person name="Seror S.J."/>
            <person name="Serror P."/>
            <person name="Shin B.-S."/>
            <person name="Soldo B."/>
            <person name="Sorokin A."/>
            <person name="Tacconi E."/>
            <person name="Takagi T."/>
            <person name="Takahashi H."/>
            <person name="Takemaru K."/>
            <person name="Takeuchi M."/>
            <person name="Tamakoshi A."/>
            <person name="Tanaka T."/>
            <person name="Terpstra P."/>
            <person name="Tognoni A."/>
            <person name="Tosato V."/>
            <person name="Uchiyama S."/>
            <person name="Vandenbol M."/>
            <person name="Vannier F."/>
            <person name="Vassarotti A."/>
            <person name="Viari A."/>
            <person name="Wambutt R."/>
            <person name="Wedler E."/>
            <person name="Wedler H."/>
            <person name="Weitzenegger T."/>
            <person name="Winters P."/>
            <person name="Wipat A."/>
            <person name="Yamamoto H."/>
            <person name="Yamane K."/>
            <person name="Yasumoto K."/>
            <person name="Yata K."/>
            <person name="Yoshida K."/>
            <person name="Yoshikawa H.-F."/>
            <person name="Zumstein E."/>
            <person name="Yoshikawa H."/>
            <person name="Danchin A."/>
        </authorList>
    </citation>
    <scope>NUCLEOTIDE SEQUENCE [LARGE SCALE GENOMIC DNA]</scope>
    <source>
        <strain>168</strain>
    </source>
</reference>
<reference key="3">
    <citation type="journal article" date="2006" name="Appl. Environ. Microbiol.">
        <title>Genetic modification of Bacillus subtilis for production of D-chiro-inositol, an investigational drug candidate for treatment of type 2 diabetes and polycystic ovary syndrome.</title>
        <authorList>
            <person name="Yoshida K."/>
            <person name="Yamaguchi M."/>
            <person name="Morinaga T."/>
            <person name="Ikeuchi M."/>
            <person name="Kinehara M."/>
            <person name="Ashida H."/>
        </authorList>
    </citation>
    <scope>FUNCTION</scope>
    <scope>CATALYTIC ACTIVITY</scope>
    <scope>COFACTOR</scope>
    <source>
        <strain>168 / 60015</strain>
    </source>
</reference>
<reference key="4">
    <citation type="journal article" date="2002" name="Proteins">
        <title>Crystal structure of Bacillus subtilis iolI shows endonuclease IV fold with altered Zn binding.</title>
        <authorList>
            <person name="Zhang R.G."/>
            <person name="Dementieva I."/>
            <person name="Duke N."/>
            <person name="Collart F."/>
            <person name="Quaite-Randall E."/>
            <person name="Alkire R."/>
            <person name="Dieckman L."/>
            <person name="Maltsev N."/>
            <person name="Korolev O."/>
            <person name="Joachimiak A."/>
        </authorList>
    </citation>
    <scope>X-RAY CRYSTALLOGRAPHY (1.60 ANGSTROMS) IN COMPLEX WITH ZINC</scope>
</reference>
<sequence>MKLCFNEATTLENSNLKLDLELCEKHGYDYIEIRTMDKLPEYLKDHSLDDLAEYFQTHHIKPLALNALVFFNNRDEKGHNEIITEFKGMMETCKTLGVKYVVAVPLVTEQKIVKEEIKKSSVDVLTELSDIAEPYGVKIALEFVGHPQCTVNTFEQAYEIVNTVNRDNVGLVLDSFHFHAMGSNIESLKQADGKKIFIYHIDDTEDFPIGFLTDEDRVWPGQGAIDLDAHLSALKEIGFSDVVSVELFRPEYYKLTAEEAIQTAKKTTVDVVSKYFSM</sequence>
<evidence type="ECO:0000269" key="1">
    <source>
    </source>
</evidence>
<evidence type="ECO:0000305" key="2"/>
<evidence type="ECO:0007829" key="3">
    <source>
        <dbReference type="PDB" id="1I60"/>
    </source>
</evidence>
<proteinExistence type="evidence at protein level"/>
<gene>
    <name type="primary">iolI</name>
    <name type="synonym">yxdH</name>
    <name type="ordered locus">BSU39680</name>
    <name type="ORF">B65B</name>
</gene>